<feature type="chain" id="PRO_1000096120" description="Elongation factor P">
    <location>
        <begin position="1"/>
        <end position="187"/>
    </location>
</feature>
<sequence>MATTADFKSGMCLNLEGRYYYIVEFLHVKPGKGPAFVRTKLKSVTTGRVIEKTFNAGVKIDEVRIERRLYLFLYQDDMIYHFMQNETFEQVFVERNNIVGVDFLKEGDMVEIVVHADSETILFAEIPIHAVLTVIYTEPGIKGDTATNATKLATIETGASIRVPLFINKGDKIKVDTRNGSYVERVK</sequence>
<evidence type="ECO:0000255" key="1">
    <source>
        <dbReference type="HAMAP-Rule" id="MF_00141"/>
    </source>
</evidence>
<protein>
    <recommendedName>
        <fullName evidence="1">Elongation factor P</fullName>
        <shortName evidence="1">EF-P</shortName>
    </recommendedName>
</protein>
<accession>B6YQT1</accession>
<reference key="1">
    <citation type="journal article" date="2008" name="Science">
        <title>Genome of an endosymbiont coupling N2 fixation to cellulolysis within RT protist cells in termite gut.</title>
        <authorList>
            <person name="Hongoh Y."/>
            <person name="Sharma V.K."/>
            <person name="Prakash T."/>
            <person name="Noda S."/>
            <person name="Toh H."/>
            <person name="Taylor T.D."/>
            <person name="Kudo T."/>
            <person name="Sakaki Y."/>
            <person name="Toyoda A."/>
            <person name="Hattori M."/>
            <person name="Ohkuma M."/>
        </authorList>
    </citation>
    <scope>NUCLEOTIDE SEQUENCE [LARGE SCALE GENOMIC DNA]</scope>
</reference>
<gene>
    <name evidence="1" type="primary">efp</name>
    <name type="ordered locus">CFPG_290</name>
</gene>
<comment type="function">
    <text evidence="1">Involved in peptide bond synthesis. Stimulates efficient translation and peptide-bond synthesis on native or reconstituted 70S ribosomes in vitro. Probably functions indirectly by altering the affinity of the ribosome for aminoacyl-tRNA, thus increasing their reactivity as acceptors for peptidyl transferase.</text>
</comment>
<comment type="pathway">
    <text evidence="1">Protein biosynthesis; polypeptide chain elongation.</text>
</comment>
<comment type="subcellular location">
    <subcellularLocation>
        <location evidence="1">Cytoplasm</location>
    </subcellularLocation>
</comment>
<comment type="similarity">
    <text evidence="1">Belongs to the elongation factor P family.</text>
</comment>
<organism>
    <name type="scientific">Azobacteroides pseudotrichonymphae genomovar. CFP2</name>
    <dbReference type="NCBI Taxonomy" id="511995"/>
    <lineage>
        <taxon>Bacteria</taxon>
        <taxon>Pseudomonadati</taxon>
        <taxon>Bacteroidota</taxon>
        <taxon>Bacteroidia</taxon>
        <taxon>Bacteroidales</taxon>
        <taxon>Candidatus Azobacteroides</taxon>
    </lineage>
</organism>
<dbReference type="EMBL" id="AP010656">
    <property type="protein sequence ID" value="BAG83553.1"/>
    <property type="molecule type" value="Genomic_DNA"/>
</dbReference>
<dbReference type="RefSeq" id="WP_012573314.1">
    <property type="nucleotide sequence ID" value="NC_011565.1"/>
</dbReference>
<dbReference type="SMR" id="B6YQT1"/>
<dbReference type="STRING" id="511995.CFPG_290"/>
<dbReference type="KEGG" id="aps:CFPG_290"/>
<dbReference type="eggNOG" id="COG0231">
    <property type="taxonomic scope" value="Bacteria"/>
</dbReference>
<dbReference type="HOGENOM" id="CLU_074944_0_1_10"/>
<dbReference type="OrthoDB" id="9801844at2"/>
<dbReference type="UniPathway" id="UPA00345"/>
<dbReference type="Proteomes" id="UP000000723">
    <property type="component" value="Chromosome"/>
</dbReference>
<dbReference type="GO" id="GO:0005737">
    <property type="term" value="C:cytoplasm"/>
    <property type="evidence" value="ECO:0007669"/>
    <property type="project" value="UniProtKB-SubCell"/>
</dbReference>
<dbReference type="GO" id="GO:0003746">
    <property type="term" value="F:translation elongation factor activity"/>
    <property type="evidence" value="ECO:0007669"/>
    <property type="project" value="UniProtKB-UniRule"/>
</dbReference>
<dbReference type="GO" id="GO:0043043">
    <property type="term" value="P:peptide biosynthetic process"/>
    <property type="evidence" value="ECO:0007669"/>
    <property type="project" value="InterPro"/>
</dbReference>
<dbReference type="CDD" id="cd05794">
    <property type="entry name" value="S1_EF-P_repeat_2"/>
    <property type="match status" value="1"/>
</dbReference>
<dbReference type="FunFam" id="2.30.30.30:FF:000003">
    <property type="entry name" value="Elongation factor P"/>
    <property type="match status" value="1"/>
</dbReference>
<dbReference type="FunFam" id="2.40.50.140:FF:000004">
    <property type="entry name" value="Elongation factor P"/>
    <property type="match status" value="1"/>
</dbReference>
<dbReference type="Gene3D" id="2.30.30.30">
    <property type="match status" value="1"/>
</dbReference>
<dbReference type="Gene3D" id="2.40.50.140">
    <property type="entry name" value="Nucleic acid-binding proteins"/>
    <property type="match status" value="2"/>
</dbReference>
<dbReference type="HAMAP" id="MF_00141">
    <property type="entry name" value="EF_P"/>
    <property type="match status" value="1"/>
</dbReference>
<dbReference type="InterPro" id="IPR015365">
    <property type="entry name" value="Elong-fact-P_C"/>
</dbReference>
<dbReference type="InterPro" id="IPR012340">
    <property type="entry name" value="NA-bd_OB-fold"/>
</dbReference>
<dbReference type="InterPro" id="IPR014722">
    <property type="entry name" value="Rib_uL2_dom2"/>
</dbReference>
<dbReference type="InterPro" id="IPR020599">
    <property type="entry name" value="Transl_elong_fac_P/YeiP"/>
</dbReference>
<dbReference type="InterPro" id="IPR013185">
    <property type="entry name" value="Transl_elong_KOW-like"/>
</dbReference>
<dbReference type="InterPro" id="IPR001059">
    <property type="entry name" value="Transl_elong_P/YeiP_cen"/>
</dbReference>
<dbReference type="InterPro" id="IPR013852">
    <property type="entry name" value="Transl_elong_P/YeiP_CS"/>
</dbReference>
<dbReference type="InterPro" id="IPR011768">
    <property type="entry name" value="Transl_elongation_fac_P"/>
</dbReference>
<dbReference type="InterPro" id="IPR008991">
    <property type="entry name" value="Translation_prot_SH3-like_sf"/>
</dbReference>
<dbReference type="NCBIfam" id="TIGR00038">
    <property type="entry name" value="efp"/>
    <property type="match status" value="1"/>
</dbReference>
<dbReference type="NCBIfam" id="NF001810">
    <property type="entry name" value="PRK00529.1"/>
    <property type="match status" value="1"/>
</dbReference>
<dbReference type="PANTHER" id="PTHR30053">
    <property type="entry name" value="ELONGATION FACTOR P"/>
    <property type="match status" value="1"/>
</dbReference>
<dbReference type="PANTHER" id="PTHR30053:SF12">
    <property type="entry name" value="ELONGATION FACTOR P (EF-P) FAMILY PROTEIN"/>
    <property type="match status" value="1"/>
</dbReference>
<dbReference type="Pfam" id="PF01132">
    <property type="entry name" value="EFP"/>
    <property type="match status" value="1"/>
</dbReference>
<dbReference type="Pfam" id="PF08207">
    <property type="entry name" value="EFP_N"/>
    <property type="match status" value="1"/>
</dbReference>
<dbReference type="Pfam" id="PF09285">
    <property type="entry name" value="Elong-fact-P_C"/>
    <property type="match status" value="1"/>
</dbReference>
<dbReference type="PIRSF" id="PIRSF005901">
    <property type="entry name" value="EF-P"/>
    <property type="match status" value="1"/>
</dbReference>
<dbReference type="SMART" id="SM01185">
    <property type="entry name" value="EFP"/>
    <property type="match status" value="1"/>
</dbReference>
<dbReference type="SMART" id="SM00841">
    <property type="entry name" value="Elong-fact-P_C"/>
    <property type="match status" value="1"/>
</dbReference>
<dbReference type="SUPFAM" id="SSF50249">
    <property type="entry name" value="Nucleic acid-binding proteins"/>
    <property type="match status" value="2"/>
</dbReference>
<dbReference type="SUPFAM" id="SSF50104">
    <property type="entry name" value="Translation proteins SH3-like domain"/>
    <property type="match status" value="1"/>
</dbReference>
<dbReference type="PROSITE" id="PS01275">
    <property type="entry name" value="EFP"/>
    <property type="match status" value="1"/>
</dbReference>
<name>EFP_AZOPC</name>
<proteinExistence type="inferred from homology"/>
<keyword id="KW-0963">Cytoplasm</keyword>
<keyword id="KW-0251">Elongation factor</keyword>
<keyword id="KW-0648">Protein biosynthesis</keyword>
<keyword id="KW-1185">Reference proteome</keyword>